<reference key="1">
    <citation type="journal article" date="1989" name="Mol. Microbiol.">
        <title>Molecular characterization of a cell wall-associated proteinase gene from Streptococcus lactis NCDO763.</title>
        <authorList>
            <person name="Kiwaki M."/>
            <person name="Ikemura H."/>
            <person name="Shimizu-Kadota M."/>
            <person name="Hirashima A."/>
        </authorList>
    </citation>
    <scope>NUCLEOTIDE SEQUENCE [GENOMIC DNA]</scope>
    <source>
        <strain>NCDO 763 / ML3</strain>
    </source>
</reference>
<sequence length="1902" mass="200140">MQRKKKGLSILLAGTVALGALAVLPVGEIQAKAAISQQTKGSSLANTVTAATAKQAATDTTAATTNQAIATQLAAKGIDYNKLNKVQQQDIYVDVIVQMSAAPASENGTLRTDYSSTAEIQQETNKVIAAQASVKAAVEQVTQQTAGESYGYVVNGFSTKVRVVDIPKLKQIAGVKTVTLAKVYYPTDAKANSMANVQAVWSNYKYKGEGTVVSVIDSGIDPTHKDMRLSDDKDVKLTKSDVEKFTDTAKHGRYFNSKVPYGFNYADNNDTITDDTVDEQHGMHVAGIIGANGTGDDPAKSVVGVAPEAQLLAMKVFTNSDTSATTGSATLVSAIEDSAKIGADVLNMSLGSDSGNQTLEDPELAAVQNANESGTAAVISAGNSGTSGSATEGVNKDYYGLQDNEMVGTPGTSRGATTVASAENTDVITQAVTITDGTGLQLGPETIQLSSNDFTGSFDQKKFYVVKDASGNLSKGKVADYTADAKGKIAIVKRGELTFADKQKYAQAAGAAGLIIVNNDGTATPVTSMALTTTFPTFGLSSVTGQKLVDWVAAHPDDSLGVKIALTLVPNQKYTEDKMSDFTSYGPVSNLSFKPDITAPGGNIWSTQNNNGYTNMSGTSMASPFIAGSQALLKQALNNKNNPFYAYYKQLKGTALTDFLKTVEMNTAQPINDINYNNVIVSPRRQGAGLVDVKAAIDALEKNPSTVVAENGYPAVELKDFTSTDKTFKLTFTNRTTHELTYQMDSNTDTNAVYTSATDPNSGVLYDKKIDGAAIKAGSNITVPAGKTAQIEFTLSLPKSFDQQQFVEGFLNFKGSDGSRLNLPYMGFFGDWNDGKIVDSLNGITYSPAGGNFGTVPLLTNKNTGTQYYGGMVTDADGNQTVDDQAIAFSSDKNALYNDISMKYYLLRNISNVQVDILDGQGNKVTTLSSSTNRKKTYYNAHSQQYIYYHAPAWDGTYYDQRDGNIKTADDGSYTYRISGVPEGGDKRQVFDVPFKLDSKAPTVRHVALSAKTENGKTQYYLTAEAKDDLSGLDATKSVKTAINEVTNLDATFTDAGTTADGYTKIETPLSDEQAQALGNGDNSAELYLTDNASNATDQDASVQKPGSTSFDLIVNGGGIPDKISSTTTGYEANTQGGGTYTFSGTYPAAVDGTYTDAQGKKHDLNTTYDAATNSFTASMPVTNADYAAQVDLYADKAHTQLLKHFDTKVRLTAPTFTDLKFNNGSDQTSEATIKVTGTVSADTKTVNVGDTVAALDAQHHFSVDVPVNYGDNTIKVTATDEDGNTTTEQKTITSSYDPDMLKNSVTFDQGVTFGANEFNATSAKFYDPKTGIATITGKVKHPTTTLQVDGKQIPIKDDLTFSFTLDLGTLGQKPFGVVVGDTTQNKTFQEALTFILDAVAPTLSLDSSTDAPVYTNNPNFQITGTATDNAQYLSLSINGSSVASQYVDININSGKPGHMAIDQPVKLLEGKNVLTVAVTDSEDNTTTKNITVYYEPKKTLAAPTVTPSTTEPAKTVTLTANSAATGETVQYSADGGKTYQDVPAAGVTVTANGTFKFKSTDLYGNESPAVDYVVTNIKADDPAQLQAAKQELTNLIASAKTLSASGKYDDATTTALAAATQKAQTALDQTNASVDSLTGANRDLQTAINQLAAKLPADKKTSLLNQLQSVKAALETDLGNQTDSSTGKTFTAALDDLVAQAQAGTQTDDQLQATLAKVLDAVLAKLAEGIKAATPAEVGNAKDAATGKTWYADIADTLTSGQASADASDKLAHLQALQSLKTKVAAAVEAAKTVGKGDGTTGTSDKGGGQGTPAPTPGDIGKDKGDEGSQPSSGGNIPTNPATTTSTSTDDTTDRNGQLTSGKGALPKTGETTERPAFGFLGVIVVSLMGVLGLKRKQREE</sequence>
<accession>P15293</accession>
<dbReference type="EC" id="3.4.21.96"/>
<dbReference type="EMBL" id="X14130">
    <property type="protein sequence ID" value="CAA32350.1"/>
    <property type="molecule type" value="Genomic_DNA"/>
</dbReference>
<dbReference type="PIR" id="S06997">
    <property type="entry name" value="S06997"/>
</dbReference>
<dbReference type="RefSeq" id="WP_063284091.1">
    <property type="nucleotide sequence ID" value="NZ_LITG01000051.1"/>
</dbReference>
<dbReference type="SMR" id="P15293"/>
<dbReference type="MEROPS" id="S08.019"/>
<dbReference type="GO" id="GO:0005576">
    <property type="term" value="C:extracellular region"/>
    <property type="evidence" value="ECO:0007669"/>
    <property type="project" value="UniProtKB-KW"/>
</dbReference>
<dbReference type="GO" id="GO:0016020">
    <property type="term" value="C:membrane"/>
    <property type="evidence" value="ECO:0007669"/>
    <property type="project" value="InterPro"/>
</dbReference>
<dbReference type="GO" id="GO:0004252">
    <property type="term" value="F:serine-type endopeptidase activity"/>
    <property type="evidence" value="ECO:0007669"/>
    <property type="project" value="InterPro"/>
</dbReference>
<dbReference type="GO" id="GO:0006508">
    <property type="term" value="P:proteolysis"/>
    <property type="evidence" value="ECO:0007669"/>
    <property type="project" value="UniProtKB-KW"/>
</dbReference>
<dbReference type="CDD" id="cd07475">
    <property type="entry name" value="Peptidases_S8_C5a_Peptidase"/>
    <property type="match status" value="1"/>
</dbReference>
<dbReference type="Gene3D" id="2.60.40.4070">
    <property type="match status" value="1"/>
</dbReference>
<dbReference type="Gene3D" id="3.50.30.30">
    <property type="match status" value="1"/>
</dbReference>
<dbReference type="Gene3D" id="2.60.40.10">
    <property type="entry name" value="Immunoglobulins"/>
    <property type="match status" value="2"/>
</dbReference>
<dbReference type="Gene3D" id="3.40.50.200">
    <property type="entry name" value="Peptidase S8/S53 domain"/>
    <property type="match status" value="1"/>
</dbReference>
<dbReference type="Gene3D" id="2.60.40.1710">
    <property type="entry name" value="Subtilisin-like superfamily"/>
    <property type="match status" value="1"/>
</dbReference>
<dbReference type="InterPro" id="IPR010435">
    <property type="entry name" value="C5a/SBT2-like_Fn3"/>
</dbReference>
<dbReference type="InterPro" id="IPR034216">
    <property type="entry name" value="C5a_Peptidase"/>
</dbReference>
<dbReference type="InterPro" id="IPR013783">
    <property type="entry name" value="Ig-like_fold"/>
</dbReference>
<dbReference type="InterPro" id="IPR019931">
    <property type="entry name" value="LPXTG_anchor"/>
</dbReference>
<dbReference type="InterPro" id="IPR046450">
    <property type="entry name" value="PA_dom_sf"/>
</dbReference>
<dbReference type="InterPro" id="IPR003137">
    <property type="entry name" value="PA_domain"/>
</dbReference>
<dbReference type="InterPro" id="IPR000209">
    <property type="entry name" value="Peptidase_S8/S53_dom"/>
</dbReference>
<dbReference type="InterPro" id="IPR036852">
    <property type="entry name" value="Peptidase_S8/S53_dom_sf"/>
</dbReference>
<dbReference type="InterPro" id="IPR023827">
    <property type="entry name" value="Peptidase_S8_Asp-AS"/>
</dbReference>
<dbReference type="InterPro" id="IPR022398">
    <property type="entry name" value="Peptidase_S8_His-AS"/>
</dbReference>
<dbReference type="InterPro" id="IPR023828">
    <property type="entry name" value="Peptidase_S8_Ser-AS"/>
</dbReference>
<dbReference type="InterPro" id="IPR050131">
    <property type="entry name" value="Peptidase_S8_subtilisin-like"/>
</dbReference>
<dbReference type="InterPro" id="IPR015500">
    <property type="entry name" value="Peptidase_S8_subtilisin-rel"/>
</dbReference>
<dbReference type="NCBIfam" id="TIGR01167">
    <property type="entry name" value="LPXTG_anchor"/>
    <property type="match status" value="1"/>
</dbReference>
<dbReference type="PANTHER" id="PTHR43806:SF11">
    <property type="entry name" value="CEREVISIN-RELATED"/>
    <property type="match status" value="1"/>
</dbReference>
<dbReference type="PANTHER" id="PTHR43806">
    <property type="entry name" value="PEPTIDASE S8"/>
    <property type="match status" value="1"/>
</dbReference>
<dbReference type="Pfam" id="PF06280">
    <property type="entry name" value="fn3_5"/>
    <property type="match status" value="1"/>
</dbReference>
<dbReference type="Pfam" id="PF09136">
    <property type="entry name" value="Glucodextran_B"/>
    <property type="match status" value="1"/>
</dbReference>
<dbReference type="Pfam" id="PF00746">
    <property type="entry name" value="Gram_pos_anchor"/>
    <property type="match status" value="1"/>
</dbReference>
<dbReference type="Pfam" id="PF02225">
    <property type="entry name" value="PA"/>
    <property type="match status" value="1"/>
</dbReference>
<dbReference type="Pfam" id="PF00082">
    <property type="entry name" value="Peptidase_S8"/>
    <property type="match status" value="1"/>
</dbReference>
<dbReference type="PRINTS" id="PR00723">
    <property type="entry name" value="SUBTILISIN"/>
</dbReference>
<dbReference type="SUPFAM" id="SSF52025">
    <property type="entry name" value="PA domain"/>
    <property type="match status" value="1"/>
</dbReference>
<dbReference type="SUPFAM" id="SSF52743">
    <property type="entry name" value="Subtilisin-like"/>
    <property type="match status" value="1"/>
</dbReference>
<dbReference type="PROSITE" id="PS50847">
    <property type="entry name" value="GRAM_POS_ANCHORING"/>
    <property type="match status" value="1"/>
</dbReference>
<dbReference type="PROSITE" id="PS51892">
    <property type="entry name" value="SUBTILASE"/>
    <property type="match status" value="1"/>
</dbReference>
<dbReference type="PROSITE" id="PS00136">
    <property type="entry name" value="SUBTILASE_ASP"/>
    <property type="match status" value="1"/>
</dbReference>
<dbReference type="PROSITE" id="PS00137">
    <property type="entry name" value="SUBTILASE_HIS"/>
    <property type="match status" value="1"/>
</dbReference>
<dbReference type="PROSITE" id="PS00138">
    <property type="entry name" value="SUBTILASE_SER"/>
    <property type="match status" value="1"/>
</dbReference>
<comment type="function">
    <text>Protease which breaks down milk proteins during the growth of the bacteria on milk.</text>
</comment>
<comment type="catalytic activity">
    <reaction>
        <text>Endopeptidase activity with very broad specificity, although some subsite preference have been noted, e.g. large hydrophobic residues in the P1 and P4 positions, and Pro in the P2 position. Best known for its action on caseins, although it has been shown to hydrolyze hemoglobin and oxidized insulin B-chain.</text>
        <dbReference type="EC" id="3.4.21.96"/>
    </reaction>
</comment>
<comment type="subcellular location">
    <subcellularLocation>
        <location evidence="2">Secreted</location>
        <location evidence="2">Cell wall</location>
        <topology evidence="2">Peptidoglycan-anchor</topology>
    </subcellularLocation>
</comment>
<comment type="similarity">
    <text evidence="5">Belongs to the peptidase S8 family.</text>
</comment>
<evidence type="ECO:0000255" key="1"/>
<evidence type="ECO:0000255" key="2">
    <source>
        <dbReference type="PROSITE-ProRule" id="PRU00477"/>
    </source>
</evidence>
<evidence type="ECO:0000255" key="3">
    <source>
        <dbReference type="PROSITE-ProRule" id="PRU01240"/>
    </source>
</evidence>
<evidence type="ECO:0000256" key="4">
    <source>
        <dbReference type="SAM" id="MobiDB-lite"/>
    </source>
</evidence>
<evidence type="ECO:0000305" key="5"/>
<protein>
    <recommendedName>
        <fullName>PII-type proteinase</fullName>
        <ecNumber>3.4.21.96</ecNumber>
    </recommendedName>
    <alternativeName>
        <fullName>Cell wall-associated serine proteinase</fullName>
    </alternativeName>
    <alternativeName>
        <fullName>LP151</fullName>
    </alternativeName>
    <alternativeName>
        <fullName>Lactocepin</fullName>
    </alternativeName>
</protein>
<organism>
    <name type="scientific">Lactococcus lactis subsp. cremoris</name>
    <name type="common">Streptococcus cremoris</name>
    <dbReference type="NCBI Taxonomy" id="1359"/>
    <lineage>
        <taxon>Bacteria</taxon>
        <taxon>Bacillati</taxon>
        <taxon>Bacillota</taxon>
        <taxon>Bacilli</taxon>
        <taxon>Lactobacillales</taxon>
        <taxon>Streptococcaceae</taxon>
        <taxon>Lactococcus</taxon>
    </lineage>
</organism>
<name>P2P_LACLC</name>
<keyword id="KW-0134">Cell wall</keyword>
<keyword id="KW-0378">Hydrolase</keyword>
<keyword id="KW-0572">Peptidoglycan-anchor</keyword>
<keyword id="KW-0614">Plasmid</keyword>
<keyword id="KW-0645">Protease</keyword>
<keyword id="KW-0677">Repeat</keyword>
<keyword id="KW-0964">Secreted</keyword>
<keyword id="KW-0720">Serine protease</keyword>
<keyword id="KW-0732">Signal</keyword>
<keyword id="KW-0865">Zymogen</keyword>
<feature type="signal peptide" evidence="1">
    <location>
        <begin position="1"/>
        <end position="33"/>
    </location>
</feature>
<feature type="propeptide" id="PRO_0000027089" evidence="1">
    <location>
        <begin position="34"/>
        <end position="187"/>
    </location>
</feature>
<feature type="chain" id="PRO_0000027090" description="PII-type proteinase">
    <location>
        <begin position="188"/>
        <end position="1870"/>
    </location>
</feature>
<feature type="propeptide" id="PRO_0000027091" description="Removed by sortase" evidence="2">
    <location>
        <begin position="1871"/>
        <end position="1902"/>
    </location>
</feature>
<feature type="domain" description="Peptidase S8" evidence="3">
    <location>
        <begin position="191"/>
        <end position="697"/>
    </location>
</feature>
<feature type="region of interest" description="Disordered" evidence="4">
    <location>
        <begin position="1796"/>
        <end position="1874"/>
    </location>
</feature>
<feature type="short sequence motif" description="LPXTG sorting signal" evidence="2">
    <location>
        <begin position="1867"/>
        <end position="1871"/>
    </location>
</feature>
<feature type="compositionally biased region" description="Gly residues" evidence="4">
    <location>
        <begin position="1797"/>
        <end position="1812"/>
    </location>
</feature>
<feature type="compositionally biased region" description="Polar residues" evidence="4">
    <location>
        <begin position="1830"/>
        <end position="1843"/>
    </location>
</feature>
<feature type="active site" description="Charge relay system" evidence="3">
    <location>
        <position position="217"/>
    </location>
</feature>
<feature type="active site" description="Charge relay system" evidence="3">
    <location>
        <position position="281"/>
    </location>
</feature>
<feature type="active site" description="Charge relay system" evidence="3">
    <location>
        <position position="620"/>
    </location>
</feature>
<feature type="modified residue" description="Pentaglycyl murein peptidoglycan amidated threonine" evidence="2">
    <location>
        <position position="1870"/>
    </location>
</feature>
<gene>
    <name type="primary">prt</name>
</gene>
<proteinExistence type="inferred from homology"/>
<geneLocation type="plasmid">
    <name>pLP763</name>
</geneLocation>